<feature type="chain" id="PRO_0000387473" description="16.6 kDa heat shock protein">
    <location>
        <begin position="1"/>
        <end position="150"/>
    </location>
</feature>
<feature type="domain" description="sHSP" evidence="1">
    <location>
        <begin position="31"/>
        <end position="150"/>
    </location>
</feature>
<reference key="1">
    <citation type="journal article" date="2002" name="Nature">
        <title>The genome sequence and structure of rice chromosome 1.</title>
        <authorList>
            <person name="Sasaki T."/>
            <person name="Matsumoto T."/>
            <person name="Yamamoto K."/>
            <person name="Sakata K."/>
            <person name="Baba T."/>
            <person name="Katayose Y."/>
            <person name="Wu J."/>
            <person name="Niimura Y."/>
            <person name="Cheng Z."/>
            <person name="Nagamura Y."/>
            <person name="Antonio B.A."/>
            <person name="Kanamori H."/>
            <person name="Hosokawa S."/>
            <person name="Masukawa M."/>
            <person name="Arikawa K."/>
            <person name="Chiden Y."/>
            <person name="Hayashi M."/>
            <person name="Okamoto M."/>
            <person name="Ando T."/>
            <person name="Aoki H."/>
            <person name="Arita K."/>
            <person name="Hamada M."/>
            <person name="Harada C."/>
            <person name="Hijishita S."/>
            <person name="Honda M."/>
            <person name="Ichikawa Y."/>
            <person name="Idonuma A."/>
            <person name="Iijima M."/>
            <person name="Ikeda M."/>
            <person name="Ikeno M."/>
            <person name="Ito S."/>
            <person name="Ito T."/>
            <person name="Ito Y."/>
            <person name="Ito Y."/>
            <person name="Iwabuchi A."/>
            <person name="Kamiya K."/>
            <person name="Karasawa W."/>
            <person name="Katagiri S."/>
            <person name="Kikuta A."/>
            <person name="Kobayashi N."/>
            <person name="Kono I."/>
            <person name="Machita K."/>
            <person name="Maehara T."/>
            <person name="Mizuno H."/>
            <person name="Mizubayashi T."/>
            <person name="Mukai Y."/>
            <person name="Nagasaki H."/>
            <person name="Nakashima M."/>
            <person name="Nakama Y."/>
            <person name="Nakamichi Y."/>
            <person name="Nakamura M."/>
            <person name="Namiki N."/>
            <person name="Negishi M."/>
            <person name="Ohta I."/>
            <person name="Ono N."/>
            <person name="Saji S."/>
            <person name="Sakai K."/>
            <person name="Shibata M."/>
            <person name="Shimokawa T."/>
            <person name="Shomura A."/>
            <person name="Song J."/>
            <person name="Takazaki Y."/>
            <person name="Terasawa K."/>
            <person name="Tsuji K."/>
            <person name="Waki K."/>
            <person name="Yamagata H."/>
            <person name="Yamane H."/>
            <person name="Yoshiki S."/>
            <person name="Yoshihara R."/>
            <person name="Yukawa K."/>
            <person name="Zhong H."/>
            <person name="Iwama H."/>
            <person name="Endo T."/>
            <person name="Ito H."/>
            <person name="Hahn J.H."/>
            <person name="Kim H.-I."/>
            <person name="Eun M.-Y."/>
            <person name="Yano M."/>
            <person name="Jiang J."/>
            <person name="Gojobori T."/>
        </authorList>
    </citation>
    <scope>NUCLEOTIDE SEQUENCE [LARGE SCALE GENOMIC DNA]</scope>
    <source>
        <strain>cv. Nipponbare</strain>
    </source>
</reference>
<reference key="2">
    <citation type="journal article" date="2005" name="Nature">
        <title>The map-based sequence of the rice genome.</title>
        <authorList>
            <consortium name="International rice genome sequencing project (IRGSP)"/>
        </authorList>
    </citation>
    <scope>NUCLEOTIDE SEQUENCE [LARGE SCALE GENOMIC DNA]</scope>
    <source>
        <strain>cv. Nipponbare</strain>
    </source>
</reference>
<reference key="3">
    <citation type="journal article" date="2008" name="Nucleic Acids Res.">
        <title>The rice annotation project database (RAP-DB): 2008 update.</title>
        <authorList>
            <consortium name="The rice annotation project (RAP)"/>
        </authorList>
    </citation>
    <scope>GENOME REANNOTATION</scope>
    <source>
        <strain>cv. Nipponbare</strain>
    </source>
</reference>
<reference key="4">
    <citation type="journal article" date="2013" name="Rice">
        <title>Improvement of the Oryza sativa Nipponbare reference genome using next generation sequence and optical map data.</title>
        <authorList>
            <person name="Kawahara Y."/>
            <person name="de la Bastide M."/>
            <person name="Hamilton J.P."/>
            <person name="Kanamori H."/>
            <person name="McCombie W.R."/>
            <person name="Ouyang S."/>
            <person name="Schwartz D.C."/>
            <person name="Tanaka T."/>
            <person name="Wu J."/>
            <person name="Zhou S."/>
            <person name="Childs K.L."/>
            <person name="Davidson R.M."/>
            <person name="Lin H."/>
            <person name="Quesada-Ocampo L."/>
            <person name="Vaillancourt B."/>
            <person name="Sakai H."/>
            <person name="Lee S.S."/>
            <person name="Kim J."/>
            <person name="Numa H."/>
            <person name="Itoh T."/>
            <person name="Buell C.R."/>
            <person name="Matsumoto T."/>
        </authorList>
    </citation>
    <scope>GENOME REANNOTATION</scope>
    <source>
        <strain>cv. Nipponbare</strain>
    </source>
</reference>
<reference key="5">
    <citation type="journal article" date="2005" name="PLoS Biol.">
        <title>The genomes of Oryza sativa: a history of duplications.</title>
        <authorList>
            <person name="Yu J."/>
            <person name="Wang J."/>
            <person name="Lin W."/>
            <person name="Li S."/>
            <person name="Li H."/>
            <person name="Zhou J."/>
            <person name="Ni P."/>
            <person name="Dong W."/>
            <person name="Hu S."/>
            <person name="Zeng C."/>
            <person name="Zhang J."/>
            <person name="Zhang Y."/>
            <person name="Li R."/>
            <person name="Xu Z."/>
            <person name="Li S."/>
            <person name="Li X."/>
            <person name="Zheng H."/>
            <person name="Cong L."/>
            <person name="Lin L."/>
            <person name="Yin J."/>
            <person name="Geng J."/>
            <person name="Li G."/>
            <person name="Shi J."/>
            <person name="Liu J."/>
            <person name="Lv H."/>
            <person name="Li J."/>
            <person name="Wang J."/>
            <person name="Deng Y."/>
            <person name="Ran L."/>
            <person name="Shi X."/>
            <person name="Wang X."/>
            <person name="Wu Q."/>
            <person name="Li C."/>
            <person name="Ren X."/>
            <person name="Wang J."/>
            <person name="Wang X."/>
            <person name="Li D."/>
            <person name="Liu D."/>
            <person name="Zhang X."/>
            <person name="Ji Z."/>
            <person name="Zhao W."/>
            <person name="Sun Y."/>
            <person name="Zhang Z."/>
            <person name="Bao J."/>
            <person name="Han Y."/>
            <person name="Dong L."/>
            <person name="Ji J."/>
            <person name="Chen P."/>
            <person name="Wu S."/>
            <person name="Liu J."/>
            <person name="Xiao Y."/>
            <person name="Bu D."/>
            <person name="Tan J."/>
            <person name="Yang L."/>
            <person name="Ye C."/>
            <person name="Zhang J."/>
            <person name="Xu J."/>
            <person name="Zhou Y."/>
            <person name="Yu Y."/>
            <person name="Zhang B."/>
            <person name="Zhuang S."/>
            <person name="Wei H."/>
            <person name="Liu B."/>
            <person name="Lei M."/>
            <person name="Yu H."/>
            <person name="Li Y."/>
            <person name="Xu H."/>
            <person name="Wei S."/>
            <person name="He X."/>
            <person name="Fang L."/>
            <person name="Zhang Z."/>
            <person name="Zhang Y."/>
            <person name="Huang X."/>
            <person name="Su Z."/>
            <person name="Tong W."/>
            <person name="Li J."/>
            <person name="Tong Z."/>
            <person name="Li S."/>
            <person name="Ye J."/>
            <person name="Wang L."/>
            <person name="Fang L."/>
            <person name="Lei T."/>
            <person name="Chen C.-S."/>
            <person name="Chen H.-C."/>
            <person name="Xu Z."/>
            <person name="Li H."/>
            <person name="Huang H."/>
            <person name="Zhang F."/>
            <person name="Xu H."/>
            <person name="Li N."/>
            <person name="Zhao C."/>
            <person name="Li S."/>
            <person name="Dong L."/>
            <person name="Huang Y."/>
            <person name="Li L."/>
            <person name="Xi Y."/>
            <person name="Qi Q."/>
            <person name="Li W."/>
            <person name="Zhang B."/>
            <person name="Hu W."/>
            <person name="Zhang Y."/>
            <person name="Tian X."/>
            <person name="Jiao Y."/>
            <person name="Liang X."/>
            <person name="Jin J."/>
            <person name="Gao L."/>
            <person name="Zheng W."/>
            <person name="Hao B."/>
            <person name="Liu S.-M."/>
            <person name="Wang W."/>
            <person name="Yuan L."/>
            <person name="Cao M."/>
            <person name="McDermott J."/>
            <person name="Samudrala R."/>
            <person name="Wang J."/>
            <person name="Wong G.K.-S."/>
            <person name="Yang H."/>
        </authorList>
    </citation>
    <scope>NUCLEOTIDE SEQUENCE [LARGE SCALE GENOMIC DNA]</scope>
    <source>
        <strain>cv. Nipponbare</strain>
    </source>
</reference>
<reference key="6">
    <citation type="journal article" date="2003" name="Science">
        <title>Collection, mapping, and annotation of over 28,000 cDNA clones from japonica rice.</title>
        <authorList>
            <consortium name="The rice full-length cDNA consortium"/>
        </authorList>
    </citation>
    <scope>NUCLEOTIDE SEQUENCE [LARGE SCALE MRNA]</scope>
    <source>
        <strain>cv. Nipponbare</strain>
    </source>
</reference>
<reference key="7">
    <citation type="journal article" date="2004" name="Plant Mol. Biol.">
        <title>Characterization of the genomic structures and selective expression profiles of nine class I small heat shock protein genes clustered on two chromosomes in rice (Oryza sativa L.).</title>
        <authorList>
            <person name="Guan J.-C."/>
            <person name="Jinn T.-L."/>
            <person name="Yeh C.-H."/>
            <person name="Feng S.-P."/>
            <person name="Chen Y.-M."/>
            <person name="Lin C.-Y."/>
        </authorList>
    </citation>
    <scope>INDUCTION</scope>
</reference>
<reference key="8">
    <citation type="journal article" date="2009" name="BMC Genomics">
        <title>Rice sHsp genes: genomic organization and expression profiling under stress and development.</title>
        <authorList>
            <person name="Sarkar N.K."/>
            <person name="Kim Y.-K."/>
            <person name="Grover A."/>
        </authorList>
    </citation>
    <scope>GENE FAMILY</scope>
</reference>
<name>HS166_ORYSJ</name>
<comment type="subunit">
    <text>May form oligomeric structures.</text>
</comment>
<comment type="subcellular location">
    <subcellularLocation>
        <location evidence="3">Cytoplasm</location>
    </subcellularLocation>
</comment>
<comment type="induction">
    <text evidence="2">By heat shock.</text>
</comment>
<comment type="similarity">
    <text evidence="1">Belongs to the small heat shock protein (HSP20) family.</text>
</comment>
<gene>
    <name type="primary">HSP16.6</name>
    <name type="ordered locus">Os01g0135800</name>
    <name type="ordered locus">LOC_Os01g04340</name>
    <name type="ORF">OsJ_00276</name>
    <name type="ORF">OSJNBa0083M16.49</name>
</gene>
<protein>
    <recommendedName>
        <fullName>16.6 kDa heat shock protein</fullName>
        <shortName>OsHsp16.6</shortName>
    </recommendedName>
</protein>
<accession>Q943Q3</accession>
<accession>A0A0P0UXY8</accession>
<sequence>MSLVRSGNVLDPMSVDFWADADPFGAVRSLAERCPVLTNVRVDWKETPTAHVFTADLPGVRKDQAKVEVEDGGVLVISGERAREEDVDGKNDERWHHVERSSGKFQRRFRLPRGARVDQVSASMDNGVLTVTVPKEETKKPQLKAIPISG</sequence>
<proteinExistence type="evidence at transcript level"/>
<dbReference type="EMBL" id="AP003214">
    <property type="protein sequence ID" value="BAB64633.1"/>
    <property type="molecule type" value="Genomic_DNA"/>
</dbReference>
<dbReference type="EMBL" id="AP008207">
    <property type="protein sequence ID" value="BAF03865.1"/>
    <property type="molecule type" value="Genomic_DNA"/>
</dbReference>
<dbReference type="EMBL" id="AP014957">
    <property type="protein sequence ID" value="BAS70258.1"/>
    <property type="molecule type" value="Genomic_DNA"/>
</dbReference>
<dbReference type="EMBL" id="CM000138">
    <property type="protein sequence ID" value="EAZ10443.1"/>
    <property type="molecule type" value="Genomic_DNA"/>
</dbReference>
<dbReference type="EMBL" id="AK063681">
    <property type="protein sequence ID" value="BAG88822.1"/>
    <property type="molecule type" value="mRNA"/>
</dbReference>
<dbReference type="RefSeq" id="XP_015620983.1">
    <property type="nucleotide sequence ID" value="XM_015765497.1"/>
</dbReference>
<dbReference type="SMR" id="Q943Q3"/>
<dbReference type="FunCoup" id="Q943Q3">
    <property type="interactions" value="440"/>
</dbReference>
<dbReference type="STRING" id="39947.Q943Q3"/>
<dbReference type="PaxDb" id="39947-Q943Q3"/>
<dbReference type="EnsemblPlants" id="Os01t0135800-01">
    <property type="protein sequence ID" value="Os01t0135800-01"/>
    <property type="gene ID" value="Os01g0135800"/>
</dbReference>
<dbReference type="Gramene" id="Os01t0135800-01">
    <property type="protein sequence ID" value="Os01t0135800-01"/>
    <property type="gene ID" value="Os01g0135800"/>
</dbReference>
<dbReference type="KEGG" id="dosa:Os01g0135800"/>
<dbReference type="eggNOG" id="KOG0710">
    <property type="taxonomic scope" value="Eukaryota"/>
</dbReference>
<dbReference type="HOGENOM" id="CLU_046737_5_0_1"/>
<dbReference type="InParanoid" id="Q943Q3"/>
<dbReference type="OMA" id="GKNERWH"/>
<dbReference type="OrthoDB" id="5511210at2759"/>
<dbReference type="Proteomes" id="UP000000763">
    <property type="component" value="Chromosome 1"/>
</dbReference>
<dbReference type="Proteomes" id="UP000007752">
    <property type="component" value="Chromosome 1"/>
</dbReference>
<dbReference type="Proteomes" id="UP000059680">
    <property type="component" value="Chromosome 1"/>
</dbReference>
<dbReference type="GO" id="GO:0005737">
    <property type="term" value="C:cytoplasm"/>
    <property type="evidence" value="ECO:0007669"/>
    <property type="project" value="UniProtKB-SubCell"/>
</dbReference>
<dbReference type="GO" id="GO:0051082">
    <property type="term" value="F:unfolded protein binding"/>
    <property type="evidence" value="ECO:0000318"/>
    <property type="project" value="GO_Central"/>
</dbReference>
<dbReference type="GO" id="GO:0051259">
    <property type="term" value="P:protein complex oligomerization"/>
    <property type="evidence" value="ECO:0000318"/>
    <property type="project" value="GO_Central"/>
</dbReference>
<dbReference type="GO" id="GO:0006457">
    <property type="term" value="P:protein folding"/>
    <property type="evidence" value="ECO:0000318"/>
    <property type="project" value="GO_Central"/>
</dbReference>
<dbReference type="GO" id="GO:0009408">
    <property type="term" value="P:response to heat"/>
    <property type="evidence" value="ECO:0000270"/>
    <property type="project" value="UniProtKB"/>
</dbReference>
<dbReference type="GO" id="GO:0042542">
    <property type="term" value="P:response to hydrogen peroxide"/>
    <property type="evidence" value="ECO:0000318"/>
    <property type="project" value="GO_Central"/>
</dbReference>
<dbReference type="GO" id="GO:0009651">
    <property type="term" value="P:response to salt stress"/>
    <property type="evidence" value="ECO:0000318"/>
    <property type="project" value="GO_Central"/>
</dbReference>
<dbReference type="CDD" id="cd06472">
    <property type="entry name" value="ACD_ScHsp26_like"/>
    <property type="match status" value="1"/>
</dbReference>
<dbReference type="FunFam" id="2.60.40.790:FF:000053">
    <property type="entry name" value="17.5 kDa class I heat shock protein"/>
    <property type="match status" value="1"/>
</dbReference>
<dbReference type="Gene3D" id="2.60.40.790">
    <property type="match status" value="1"/>
</dbReference>
<dbReference type="InterPro" id="IPR002068">
    <property type="entry name" value="A-crystallin/Hsp20_dom"/>
</dbReference>
<dbReference type="InterPro" id="IPR008978">
    <property type="entry name" value="HSP20-like_chaperone"/>
</dbReference>
<dbReference type="InterPro" id="IPR031107">
    <property type="entry name" value="Small_HSP"/>
</dbReference>
<dbReference type="PANTHER" id="PTHR11527">
    <property type="entry name" value="HEAT-SHOCK PROTEIN 20 FAMILY MEMBER"/>
    <property type="match status" value="1"/>
</dbReference>
<dbReference type="Pfam" id="PF00011">
    <property type="entry name" value="HSP20"/>
    <property type="match status" value="1"/>
</dbReference>
<dbReference type="SUPFAM" id="SSF49764">
    <property type="entry name" value="HSP20-like chaperones"/>
    <property type="match status" value="1"/>
</dbReference>
<dbReference type="PROSITE" id="PS01031">
    <property type="entry name" value="SHSP"/>
    <property type="match status" value="1"/>
</dbReference>
<organism>
    <name type="scientific">Oryza sativa subsp. japonica</name>
    <name type="common">Rice</name>
    <dbReference type="NCBI Taxonomy" id="39947"/>
    <lineage>
        <taxon>Eukaryota</taxon>
        <taxon>Viridiplantae</taxon>
        <taxon>Streptophyta</taxon>
        <taxon>Embryophyta</taxon>
        <taxon>Tracheophyta</taxon>
        <taxon>Spermatophyta</taxon>
        <taxon>Magnoliopsida</taxon>
        <taxon>Liliopsida</taxon>
        <taxon>Poales</taxon>
        <taxon>Poaceae</taxon>
        <taxon>BOP clade</taxon>
        <taxon>Oryzoideae</taxon>
        <taxon>Oryzeae</taxon>
        <taxon>Oryzinae</taxon>
        <taxon>Oryza</taxon>
        <taxon>Oryza sativa</taxon>
    </lineage>
</organism>
<evidence type="ECO:0000255" key="1">
    <source>
        <dbReference type="PROSITE-ProRule" id="PRU00285"/>
    </source>
</evidence>
<evidence type="ECO:0000269" key="2">
    <source>
    </source>
</evidence>
<evidence type="ECO:0000305" key="3"/>
<keyword id="KW-0963">Cytoplasm</keyword>
<keyword id="KW-1185">Reference proteome</keyword>
<keyword id="KW-0346">Stress response</keyword>